<accession>P54020</accession>
<organism>
    <name type="scientific">Methanocaldococcus jannaschii (strain ATCC 43067 / DSM 2661 / JAL-1 / JCM 10045 / NBRC 100440)</name>
    <name type="common">Methanococcus jannaschii</name>
    <dbReference type="NCBI Taxonomy" id="243232"/>
    <lineage>
        <taxon>Archaea</taxon>
        <taxon>Methanobacteriati</taxon>
        <taxon>Methanobacteriota</taxon>
        <taxon>Methanomada group</taxon>
        <taxon>Methanococci</taxon>
        <taxon>Methanococcales</taxon>
        <taxon>Methanocaldococcaceae</taxon>
        <taxon>Methanocaldococcus</taxon>
    </lineage>
</organism>
<sequence length="187" mass="22050">MGDPRRRFKKTYETPNHPWIKERIEREKELCRKYGLRRKREVWKAETILRKYRRQARRLISDRTEQGAKEAVQLFNVLKKYGILKIENPTLDDVLSLTVEDILERRLQTLVFRKGLARTPRQARQLIVHGHIAVNGRVVTAPSYMVTVEEEDKISYAKNSPFNDDNHPERAKIVGLVAEETQTQETE</sequence>
<dbReference type="EMBL" id="L77117">
    <property type="protein sequence ID" value="AAB98170.1"/>
    <property type="molecule type" value="Genomic_DNA"/>
</dbReference>
<dbReference type="PIR" id="G64323">
    <property type="entry name" value="G64323"/>
</dbReference>
<dbReference type="RefSeq" id="WP_010869685.1">
    <property type="nucleotide sequence ID" value="NC_000909.1"/>
</dbReference>
<dbReference type="SMR" id="P54020"/>
<dbReference type="FunCoup" id="P54020">
    <property type="interactions" value="190"/>
</dbReference>
<dbReference type="STRING" id="243232.MJ_0190"/>
<dbReference type="PaxDb" id="243232-MJ_0190"/>
<dbReference type="EnsemblBacteria" id="AAB98170">
    <property type="protein sequence ID" value="AAB98170"/>
    <property type="gene ID" value="MJ_0190"/>
</dbReference>
<dbReference type="GeneID" id="1451038"/>
<dbReference type="KEGG" id="mja:MJ_0190"/>
<dbReference type="eggNOG" id="arCOG04239">
    <property type="taxonomic scope" value="Archaea"/>
</dbReference>
<dbReference type="HOGENOM" id="CLU_089738_1_1_2"/>
<dbReference type="InParanoid" id="P54020"/>
<dbReference type="OrthoDB" id="10429at2157"/>
<dbReference type="PhylomeDB" id="P54020"/>
<dbReference type="Proteomes" id="UP000000805">
    <property type="component" value="Chromosome"/>
</dbReference>
<dbReference type="GO" id="GO:0015935">
    <property type="term" value="C:small ribosomal subunit"/>
    <property type="evidence" value="ECO:0000318"/>
    <property type="project" value="GO_Central"/>
</dbReference>
<dbReference type="GO" id="GO:0019843">
    <property type="term" value="F:rRNA binding"/>
    <property type="evidence" value="ECO:0000318"/>
    <property type="project" value="GO_Central"/>
</dbReference>
<dbReference type="GO" id="GO:0003735">
    <property type="term" value="F:structural constituent of ribosome"/>
    <property type="evidence" value="ECO:0000318"/>
    <property type="project" value="GO_Central"/>
</dbReference>
<dbReference type="GO" id="GO:0042274">
    <property type="term" value="P:ribosomal small subunit biogenesis"/>
    <property type="evidence" value="ECO:0000318"/>
    <property type="project" value="GO_Central"/>
</dbReference>
<dbReference type="GO" id="GO:0006412">
    <property type="term" value="P:translation"/>
    <property type="evidence" value="ECO:0007669"/>
    <property type="project" value="UniProtKB-UniRule"/>
</dbReference>
<dbReference type="CDD" id="cd00165">
    <property type="entry name" value="S4"/>
    <property type="match status" value="1"/>
</dbReference>
<dbReference type="FunFam" id="3.10.290.10:FF:000026">
    <property type="entry name" value="30S ribosomal protein S4"/>
    <property type="match status" value="1"/>
</dbReference>
<dbReference type="Gene3D" id="3.10.290.10">
    <property type="entry name" value="RNA-binding S4 domain"/>
    <property type="match status" value="1"/>
</dbReference>
<dbReference type="HAMAP" id="MF_01306_A">
    <property type="entry name" value="Ribosomal_uS4_A"/>
    <property type="match status" value="1"/>
</dbReference>
<dbReference type="InterPro" id="IPR022801">
    <property type="entry name" value="Ribosomal_uS4"/>
</dbReference>
<dbReference type="InterPro" id="IPR022802">
    <property type="entry name" value="Ribosomal_uS4_arc"/>
</dbReference>
<dbReference type="InterPro" id="IPR018079">
    <property type="entry name" value="Ribosomal_uS4_CS"/>
</dbReference>
<dbReference type="InterPro" id="IPR005710">
    <property type="entry name" value="Ribosomal_uS4_euk/arc"/>
</dbReference>
<dbReference type="InterPro" id="IPR001912">
    <property type="entry name" value="Ribosomal_uS4_N"/>
</dbReference>
<dbReference type="InterPro" id="IPR002942">
    <property type="entry name" value="S4_RNA-bd"/>
</dbReference>
<dbReference type="InterPro" id="IPR036986">
    <property type="entry name" value="S4_RNA-bd_sf"/>
</dbReference>
<dbReference type="NCBIfam" id="NF003139">
    <property type="entry name" value="PRK04051.1"/>
    <property type="match status" value="1"/>
</dbReference>
<dbReference type="NCBIfam" id="TIGR01018">
    <property type="entry name" value="uS4_arch"/>
    <property type="match status" value="1"/>
</dbReference>
<dbReference type="PANTHER" id="PTHR11831">
    <property type="entry name" value="30S 40S RIBOSOMAL PROTEIN"/>
    <property type="match status" value="1"/>
</dbReference>
<dbReference type="PANTHER" id="PTHR11831:SF5">
    <property type="entry name" value="40S RIBOSOMAL PROTEIN S9"/>
    <property type="match status" value="1"/>
</dbReference>
<dbReference type="Pfam" id="PF00163">
    <property type="entry name" value="Ribosomal_S4"/>
    <property type="match status" value="1"/>
</dbReference>
<dbReference type="Pfam" id="PF01479">
    <property type="entry name" value="S4"/>
    <property type="match status" value="1"/>
</dbReference>
<dbReference type="SMART" id="SM01390">
    <property type="entry name" value="Ribosomal_S4"/>
    <property type="match status" value="1"/>
</dbReference>
<dbReference type="SMART" id="SM00363">
    <property type="entry name" value="S4"/>
    <property type="match status" value="1"/>
</dbReference>
<dbReference type="SUPFAM" id="SSF55174">
    <property type="entry name" value="Alpha-L RNA-binding motif"/>
    <property type="match status" value="1"/>
</dbReference>
<dbReference type="PROSITE" id="PS00632">
    <property type="entry name" value="RIBOSOMAL_S4"/>
    <property type="match status" value="1"/>
</dbReference>
<dbReference type="PROSITE" id="PS50889">
    <property type="entry name" value="S4"/>
    <property type="match status" value="1"/>
</dbReference>
<feature type="chain" id="PRO_0000132508" description="Small ribosomal subunit protein uS4">
    <location>
        <begin position="1"/>
        <end position="187"/>
    </location>
</feature>
<feature type="domain" description="S4 RNA-binding" evidence="1">
    <location>
        <begin position="105"/>
        <end position="174"/>
    </location>
</feature>
<reference key="1">
    <citation type="journal article" date="1996" name="Science">
        <title>Complete genome sequence of the methanogenic archaeon, Methanococcus jannaschii.</title>
        <authorList>
            <person name="Bult C.J."/>
            <person name="White O."/>
            <person name="Olsen G.J."/>
            <person name="Zhou L."/>
            <person name="Fleischmann R.D."/>
            <person name="Sutton G.G."/>
            <person name="Blake J.A."/>
            <person name="FitzGerald L.M."/>
            <person name="Clayton R.A."/>
            <person name="Gocayne J.D."/>
            <person name="Kerlavage A.R."/>
            <person name="Dougherty B.A."/>
            <person name="Tomb J.-F."/>
            <person name="Adams M.D."/>
            <person name="Reich C.I."/>
            <person name="Overbeek R."/>
            <person name="Kirkness E.F."/>
            <person name="Weinstock K.G."/>
            <person name="Merrick J.M."/>
            <person name="Glodek A."/>
            <person name="Scott J.L."/>
            <person name="Geoghagen N.S.M."/>
            <person name="Weidman J.F."/>
            <person name="Fuhrmann J.L."/>
            <person name="Nguyen D."/>
            <person name="Utterback T.R."/>
            <person name="Kelley J.M."/>
            <person name="Peterson J.D."/>
            <person name="Sadow P.W."/>
            <person name="Hanna M.C."/>
            <person name="Cotton M.D."/>
            <person name="Roberts K.M."/>
            <person name="Hurst M.A."/>
            <person name="Kaine B.P."/>
            <person name="Borodovsky M."/>
            <person name="Klenk H.-P."/>
            <person name="Fraser C.M."/>
            <person name="Smith H.O."/>
            <person name="Woese C.R."/>
            <person name="Venter J.C."/>
        </authorList>
    </citation>
    <scope>NUCLEOTIDE SEQUENCE [LARGE SCALE GENOMIC DNA]</scope>
    <source>
        <strain>ATCC 43067 / DSM 2661 / JAL-1 / JCM 10045 / NBRC 100440</strain>
    </source>
</reference>
<name>RS4_METJA</name>
<protein>
    <recommendedName>
        <fullName evidence="1">Small ribosomal subunit protein uS4</fullName>
    </recommendedName>
    <alternativeName>
        <fullName evidence="2">30S ribosomal protein S4</fullName>
    </alternativeName>
</protein>
<proteinExistence type="inferred from homology"/>
<evidence type="ECO:0000255" key="1">
    <source>
        <dbReference type="HAMAP-Rule" id="MF_01306"/>
    </source>
</evidence>
<evidence type="ECO:0000305" key="2"/>
<comment type="function">
    <text evidence="1">One of the primary rRNA binding proteins, it binds directly to 16S rRNA where it nucleates assembly of the body of the 30S subunit.</text>
</comment>
<comment type="function">
    <text evidence="1">With S5 and S12 plays an important role in translational accuracy.</text>
</comment>
<comment type="subunit">
    <text evidence="1">Part of the 30S ribosomal subunit. Contacts protein S5. The interaction surface between S4 and S5 is involved in control of translational fidelity.</text>
</comment>
<comment type="similarity">
    <text evidence="1">Belongs to the universal ribosomal protein uS4 family.</text>
</comment>
<gene>
    <name evidence="1" type="primary">rps4</name>
    <name type="ordered locus">MJ0190</name>
</gene>
<keyword id="KW-1185">Reference proteome</keyword>
<keyword id="KW-0687">Ribonucleoprotein</keyword>
<keyword id="KW-0689">Ribosomal protein</keyword>
<keyword id="KW-0694">RNA-binding</keyword>
<keyword id="KW-0699">rRNA-binding</keyword>